<comment type="function">
    <text evidence="1">Per os factor that plays a role in the initiation of host midgut infection. Unlike PIF1 and PIF2, PIF3 is not involved in specific binding of occluded virions (ODV) to the host midgut target cells.</text>
</comment>
<comment type="subunit">
    <text evidence="1">Forms the PIF complex together with PIF1 and PIF2. The complex also interacts with per os infectivity factor PIF0.</text>
</comment>
<feature type="chain" id="PRO_0000133053" description="Per os infectivity factor 3">
    <location>
        <begin position="1"/>
        <end position="204"/>
    </location>
</feature>
<evidence type="ECO:0000269" key="1">
    <source>
    </source>
</evidence>
<organismHost>
    <name type="scientific">Lepidoptera</name>
    <name type="common">butterflies and moths</name>
    <dbReference type="NCBI Taxonomy" id="7088"/>
</organismHost>
<reference key="1">
    <citation type="journal article" date="1994" name="Virology">
        <title>The complete DNA sequence of Autographa californica nuclear polyhedrosis virus.</title>
        <authorList>
            <person name="Ayres M.D."/>
            <person name="Howard S.C."/>
            <person name="Kuzio J."/>
            <person name="Lopez-Ferber M."/>
            <person name="Possee R.D."/>
        </authorList>
    </citation>
    <scope>NUCLEOTIDE SEQUENCE [LARGE SCALE GENOMIC DNA]</scope>
    <source>
        <strain>C6</strain>
    </source>
</reference>
<reference key="2">
    <citation type="journal article" date="2005" name="J. Virol.">
        <title>Specific binding of Autographa californica M nucleopolyhedrovirus occlusion-derived virus to midgut cells of Heliothis virescens larvae is mediated by products of pif genes Ac119 and Ac022 but not by Ac115.</title>
        <authorList>
            <person name="Ohkawa T."/>
            <person name="Washburn J.O."/>
            <person name="Sitapara R."/>
            <person name="Sid E."/>
            <person name="Volkman L.E."/>
        </authorList>
    </citation>
    <scope>FUNCTION</scope>
</reference>
<reference key="3">
    <citation type="journal article" date="2010" name="J. Virol.">
        <title>Baculovirus per os infectivity factors form a complex on the surface of occlusion-derived virus.</title>
        <authorList>
            <person name="Peng K."/>
            <person name="van Oers M.M."/>
            <person name="Hu Z."/>
            <person name="van Lent J.W."/>
            <person name="Vlak J.M."/>
        </authorList>
    </citation>
    <scope>INTERACTION WITH PIF1; PIF2 AND PIF0</scope>
</reference>
<sequence>MLNFWQILILLVIILIVYMYTFKFVQKFILQDAYMHINELEAPPLNFTFQRNRGVDCSLNRLPCVTDQQCRDNCVISSAANELTCQDGFCNASDALVNAQAPDLIECDPALGLVHVFSAGGDFVVSQTCVSTYRDLVDDTGTPRPYLCNDGRLNMNLNTVQFSPDACDCSSGYEKMLFRQTALARTIPVCIPNRMANLYRRVYN</sequence>
<organism>
    <name type="scientific">Autographa californica nuclear polyhedrosis virus</name>
    <name type="common">AcMNPV</name>
    <dbReference type="NCBI Taxonomy" id="46015"/>
    <lineage>
        <taxon>Viruses</taxon>
        <taxon>Viruses incertae sedis</taxon>
        <taxon>Naldaviricetes</taxon>
        <taxon>Lefavirales</taxon>
        <taxon>Baculoviridae</taxon>
        <taxon>Alphabaculovirus</taxon>
        <taxon>Alphabaculovirus aucalifornicae</taxon>
    </lineage>
</organism>
<gene>
    <name type="primary">AC115</name>
    <name type="ORF">ORF115</name>
</gene>
<dbReference type="EMBL" id="L22858">
    <property type="protein sequence ID" value="AAA66745.1"/>
    <property type="molecule type" value="Genomic_DNA"/>
</dbReference>
<dbReference type="PIR" id="D72864">
    <property type="entry name" value="D72864"/>
</dbReference>
<dbReference type="SMR" id="P41668"/>
<dbReference type="KEGG" id="vg:1403948"/>
<dbReference type="OrthoDB" id="9997at10239"/>
<dbReference type="Proteomes" id="UP000008292">
    <property type="component" value="Segment"/>
</dbReference>
<dbReference type="InterPro" id="IPR007703">
    <property type="entry name" value="PIF3"/>
</dbReference>
<dbReference type="Pfam" id="PF05006">
    <property type="entry name" value="PIF3"/>
    <property type="match status" value="1"/>
</dbReference>
<protein>
    <recommendedName>
        <fullName>Per os infectivity factor 3</fullName>
        <shortName>PIF3</shortName>
    </recommendedName>
</protein>
<name>PIF3_NPVAC</name>
<keyword id="KW-1185">Reference proteome</keyword>
<proteinExistence type="evidence at protein level"/>
<accession>P41668</accession>